<name>BIOB_EMENI</name>
<evidence type="ECO:0000250" key="1">
    <source>
        <dbReference type="UniProtKB" id="P12996"/>
    </source>
</evidence>
<evidence type="ECO:0000255" key="2"/>
<evidence type="ECO:0000255" key="3">
    <source>
        <dbReference type="PROSITE-ProRule" id="PRU01266"/>
    </source>
</evidence>
<evidence type="ECO:0000256" key="4">
    <source>
        <dbReference type="SAM" id="MobiDB-lite"/>
    </source>
</evidence>
<evidence type="ECO:0000269" key="5">
    <source>
    </source>
</evidence>
<evidence type="ECO:0000303" key="6">
    <source>
    </source>
</evidence>
<evidence type="ECO:0000305" key="7"/>
<evidence type="ECO:0000305" key="8">
    <source>
    </source>
</evidence>
<organism>
    <name type="scientific">Emericella nidulans (strain FGSC A4 / ATCC 38163 / CBS 112.46 / NRRL 194 / M139)</name>
    <name type="common">Aspergillus nidulans</name>
    <dbReference type="NCBI Taxonomy" id="227321"/>
    <lineage>
        <taxon>Eukaryota</taxon>
        <taxon>Fungi</taxon>
        <taxon>Dikarya</taxon>
        <taxon>Ascomycota</taxon>
        <taxon>Pezizomycotina</taxon>
        <taxon>Eurotiomycetes</taxon>
        <taxon>Eurotiomycetidae</taxon>
        <taxon>Eurotiales</taxon>
        <taxon>Aspergillaceae</taxon>
        <taxon>Aspergillus</taxon>
        <taxon>Aspergillus subgen. Nidulantes</taxon>
    </lineage>
</organism>
<proteinExistence type="evidence at transcript level"/>
<accession>Q5AYI7</accession>
<accession>A0A1U8QYB2</accession>
<accession>C8V1C9</accession>
<feature type="transit peptide" description="Mitochondrion" evidence="2">
    <location>
        <begin position="1"/>
        <end position="20"/>
    </location>
</feature>
<feature type="chain" id="PRO_0000449413" description="Biotin synthase, mitochondrial">
    <location>
        <begin position="21"/>
        <end position="393"/>
    </location>
</feature>
<feature type="domain" description="Radical SAM core" evidence="3">
    <location>
        <begin position="81"/>
        <end position="310"/>
    </location>
</feature>
<feature type="region of interest" description="Disordered" evidence="4">
    <location>
        <begin position="366"/>
        <end position="393"/>
    </location>
</feature>
<feature type="binding site" evidence="1">
    <location>
        <position position="96"/>
    </location>
    <ligand>
        <name>[4Fe-4S] cluster</name>
        <dbReference type="ChEBI" id="CHEBI:49883"/>
        <note>4Fe-4S-S-AdoMet</note>
    </ligand>
</feature>
<feature type="binding site" evidence="1">
    <location>
        <position position="100"/>
    </location>
    <ligand>
        <name>[4Fe-4S] cluster</name>
        <dbReference type="ChEBI" id="CHEBI:49883"/>
        <note>4Fe-4S-S-AdoMet</note>
    </ligand>
</feature>
<feature type="binding site" evidence="1">
    <location>
        <position position="103"/>
    </location>
    <ligand>
        <name>[4Fe-4S] cluster</name>
        <dbReference type="ChEBI" id="CHEBI:49883"/>
        <note>4Fe-4S-S-AdoMet</note>
    </ligand>
</feature>
<feature type="binding site" evidence="1">
    <location>
        <position position="140"/>
    </location>
    <ligand>
        <name>[2Fe-2S] cluster</name>
        <dbReference type="ChEBI" id="CHEBI:190135"/>
    </ligand>
</feature>
<feature type="binding site" evidence="1">
    <location>
        <position position="173"/>
    </location>
    <ligand>
        <name>[2Fe-2S] cluster</name>
        <dbReference type="ChEBI" id="CHEBI:190135"/>
    </ligand>
</feature>
<feature type="binding site" evidence="1">
    <location>
        <position position="233"/>
    </location>
    <ligand>
        <name>[2Fe-2S] cluster</name>
        <dbReference type="ChEBI" id="CHEBI:190135"/>
    </ligand>
</feature>
<feature type="binding site" evidence="1">
    <location>
        <position position="305"/>
    </location>
    <ligand>
        <name>[2Fe-2S] cluster</name>
        <dbReference type="ChEBI" id="CHEBI:190135"/>
    </ligand>
</feature>
<reference key="1">
    <citation type="journal article" date="2005" name="Nature">
        <title>Sequencing of Aspergillus nidulans and comparative analysis with A. fumigatus and A. oryzae.</title>
        <authorList>
            <person name="Galagan J.E."/>
            <person name="Calvo S.E."/>
            <person name="Cuomo C."/>
            <person name="Ma L.-J."/>
            <person name="Wortman J.R."/>
            <person name="Batzoglou S."/>
            <person name="Lee S.-I."/>
            <person name="Bastuerkmen M."/>
            <person name="Spevak C.C."/>
            <person name="Clutterbuck J."/>
            <person name="Kapitonov V."/>
            <person name="Jurka J."/>
            <person name="Scazzocchio C."/>
            <person name="Farman M.L."/>
            <person name="Butler J."/>
            <person name="Purcell S."/>
            <person name="Harris S."/>
            <person name="Braus G.H."/>
            <person name="Draht O."/>
            <person name="Busch S."/>
            <person name="D'Enfert C."/>
            <person name="Bouchier C."/>
            <person name="Goldman G.H."/>
            <person name="Bell-Pedersen D."/>
            <person name="Griffiths-Jones S."/>
            <person name="Doonan J.H."/>
            <person name="Yu J."/>
            <person name="Vienken K."/>
            <person name="Pain A."/>
            <person name="Freitag M."/>
            <person name="Selker E.U."/>
            <person name="Archer D.B."/>
            <person name="Penalva M.A."/>
            <person name="Oakley B.R."/>
            <person name="Momany M."/>
            <person name="Tanaka T."/>
            <person name="Kumagai T."/>
            <person name="Asai K."/>
            <person name="Machida M."/>
            <person name="Nierman W.C."/>
            <person name="Denning D.W."/>
            <person name="Caddick M.X."/>
            <person name="Hynes M."/>
            <person name="Paoletti M."/>
            <person name="Fischer R."/>
            <person name="Miller B.L."/>
            <person name="Dyer P.S."/>
            <person name="Sachs M.S."/>
            <person name="Osmani S.A."/>
            <person name="Birren B.W."/>
        </authorList>
    </citation>
    <scope>NUCLEOTIDE SEQUENCE [LARGE SCALE GENOMIC DNA]</scope>
    <source>
        <strain>FGSC A4 / ATCC 38163 / CBS 112.46 / NRRL 194 / M139</strain>
    </source>
</reference>
<reference key="2">
    <citation type="journal article" date="2009" name="Fungal Genet. Biol.">
        <title>The 2008 update of the Aspergillus nidulans genome annotation: a community effort.</title>
        <authorList>
            <person name="Wortman J.R."/>
            <person name="Gilsenan J.M."/>
            <person name="Joardar V."/>
            <person name="Deegan J."/>
            <person name="Clutterbuck J."/>
            <person name="Andersen M.R."/>
            <person name="Archer D."/>
            <person name="Bencina M."/>
            <person name="Braus G."/>
            <person name="Coutinho P."/>
            <person name="von Dohren H."/>
            <person name="Doonan J."/>
            <person name="Driessen A.J."/>
            <person name="Durek P."/>
            <person name="Espeso E."/>
            <person name="Fekete E."/>
            <person name="Flipphi M."/>
            <person name="Estrada C.G."/>
            <person name="Geysens S."/>
            <person name="Goldman G."/>
            <person name="de Groot P.W."/>
            <person name="Hansen K."/>
            <person name="Harris S.D."/>
            <person name="Heinekamp T."/>
            <person name="Helmstaedt K."/>
            <person name="Henrissat B."/>
            <person name="Hofmann G."/>
            <person name="Homan T."/>
            <person name="Horio T."/>
            <person name="Horiuchi H."/>
            <person name="James S."/>
            <person name="Jones M."/>
            <person name="Karaffa L."/>
            <person name="Karanyi Z."/>
            <person name="Kato M."/>
            <person name="Keller N."/>
            <person name="Kelly D.E."/>
            <person name="Kiel J.A."/>
            <person name="Kim J.M."/>
            <person name="van der Klei I.J."/>
            <person name="Klis F.M."/>
            <person name="Kovalchuk A."/>
            <person name="Krasevec N."/>
            <person name="Kubicek C.P."/>
            <person name="Liu B."/>
            <person name="Maccabe A."/>
            <person name="Meyer V."/>
            <person name="Mirabito P."/>
            <person name="Miskei M."/>
            <person name="Mos M."/>
            <person name="Mullins J."/>
            <person name="Nelson D.R."/>
            <person name="Nielsen J."/>
            <person name="Oakley B.R."/>
            <person name="Osmani S.A."/>
            <person name="Pakula T."/>
            <person name="Paszewski A."/>
            <person name="Paulsen I."/>
            <person name="Pilsyk S."/>
            <person name="Pocsi I."/>
            <person name="Punt P.J."/>
            <person name="Ram A.F."/>
            <person name="Ren Q."/>
            <person name="Robellet X."/>
            <person name="Robson G."/>
            <person name="Seiboth B."/>
            <person name="van Solingen P."/>
            <person name="Specht T."/>
            <person name="Sun J."/>
            <person name="Taheri-Talesh N."/>
            <person name="Takeshita N."/>
            <person name="Ussery D."/>
            <person name="vanKuyk P.A."/>
            <person name="Visser H."/>
            <person name="van de Vondervoort P.J."/>
            <person name="de Vries R.P."/>
            <person name="Walton J."/>
            <person name="Xiang X."/>
            <person name="Xiong Y."/>
            <person name="Zeng A.P."/>
            <person name="Brandt B.W."/>
            <person name="Cornell M.J."/>
            <person name="van den Hondel C.A."/>
            <person name="Visser J."/>
            <person name="Oliver S.G."/>
            <person name="Turner G."/>
        </authorList>
    </citation>
    <scope>GENOME REANNOTATION</scope>
    <source>
        <strain>FGSC A4 / ATCC 38163 / CBS 112.46 / NRRL 194 / M139</strain>
    </source>
</reference>
<reference key="3">
    <citation type="journal article" date="2011" name="Fungal Genet. Biol.">
        <title>Characterization of the Aspergillus nidulans biotin biosynthetic gene cluster and use of the bioDA gene as a new transformation marker.</title>
        <authorList>
            <person name="Magliano P."/>
            <person name="Flipphi M."/>
            <person name="Sanglard D."/>
            <person name="Poirier Y."/>
        </authorList>
    </citation>
    <scope>FUNCTION</scope>
    <scope>INDUCTION</scope>
    <scope>PATHWAY</scope>
</reference>
<dbReference type="EC" id="2.8.1.6" evidence="8"/>
<dbReference type="EMBL" id="AACD01000110">
    <property type="protein sequence ID" value="EAA58172.1"/>
    <property type="molecule type" value="Genomic_DNA"/>
</dbReference>
<dbReference type="EMBL" id="BN001301">
    <property type="protein sequence ID" value="CBF71159.1"/>
    <property type="molecule type" value="Genomic_DNA"/>
</dbReference>
<dbReference type="RefSeq" id="XP_664247.1">
    <property type="nucleotide sequence ID" value="XM_659155.1"/>
</dbReference>
<dbReference type="SMR" id="Q5AYI7"/>
<dbReference type="FunCoup" id="Q5AYI7">
    <property type="interactions" value="203"/>
</dbReference>
<dbReference type="STRING" id="227321.Q5AYI7"/>
<dbReference type="EnsemblFungi" id="CBF71159">
    <property type="protein sequence ID" value="CBF71159"/>
    <property type="gene ID" value="ANIA_06643"/>
</dbReference>
<dbReference type="GeneID" id="2870394"/>
<dbReference type="KEGG" id="ani:ANIA_06643"/>
<dbReference type="VEuPathDB" id="FungiDB:AN6643"/>
<dbReference type="eggNOG" id="KOG2900">
    <property type="taxonomic scope" value="Eukaryota"/>
</dbReference>
<dbReference type="HOGENOM" id="CLU_033172_1_2_1"/>
<dbReference type="InParanoid" id="Q5AYI7"/>
<dbReference type="OMA" id="NICTTHT"/>
<dbReference type="OrthoDB" id="2414104at2759"/>
<dbReference type="UniPathway" id="UPA00078">
    <property type="reaction ID" value="UER00162"/>
</dbReference>
<dbReference type="Proteomes" id="UP000000560">
    <property type="component" value="Chromosome I"/>
</dbReference>
<dbReference type="GO" id="GO:0005739">
    <property type="term" value="C:mitochondrion"/>
    <property type="evidence" value="ECO:0007669"/>
    <property type="project" value="UniProtKB-SubCell"/>
</dbReference>
<dbReference type="GO" id="GO:0051537">
    <property type="term" value="F:2 iron, 2 sulfur cluster binding"/>
    <property type="evidence" value="ECO:0000318"/>
    <property type="project" value="GO_Central"/>
</dbReference>
<dbReference type="GO" id="GO:0051539">
    <property type="term" value="F:4 iron, 4 sulfur cluster binding"/>
    <property type="evidence" value="ECO:0007669"/>
    <property type="project" value="UniProtKB-KW"/>
</dbReference>
<dbReference type="GO" id="GO:0004076">
    <property type="term" value="F:biotin synthase activity"/>
    <property type="evidence" value="ECO:0000318"/>
    <property type="project" value="GO_Central"/>
</dbReference>
<dbReference type="GO" id="GO:0046872">
    <property type="term" value="F:metal ion binding"/>
    <property type="evidence" value="ECO:0007669"/>
    <property type="project" value="UniProtKB-KW"/>
</dbReference>
<dbReference type="GO" id="GO:0009102">
    <property type="term" value="P:biotin biosynthetic process"/>
    <property type="evidence" value="ECO:0000315"/>
    <property type="project" value="AspGD"/>
</dbReference>
<dbReference type="CDD" id="cd01335">
    <property type="entry name" value="Radical_SAM"/>
    <property type="match status" value="1"/>
</dbReference>
<dbReference type="FunFam" id="3.20.20.70:FF:000011">
    <property type="entry name" value="Biotin synthase"/>
    <property type="match status" value="1"/>
</dbReference>
<dbReference type="Gene3D" id="3.20.20.70">
    <property type="entry name" value="Aldolase class I"/>
    <property type="match status" value="1"/>
</dbReference>
<dbReference type="HAMAP" id="MF_01694">
    <property type="entry name" value="BioB"/>
    <property type="match status" value="1"/>
</dbReference>
<dbReference type="InterPro" id="IPR013785">
    <property type="entry name" value="Aldolase_TIM"/>
</dbReference>
<dbReference type="InterPro" id="IPR010722">
    <property type="entry name" value="BATS_dom"/>
</dbReference>
<dbReference type="InterPro" id="IPR002684">
    <property type="entry name" value="Biotin_synth/BioAB"/>
</dbReference>
<dbReference type="InterPro" id="IPR024177">
    <property type="entry name" value="Biotin_synthase"/>
</dbReference>
<dbReference type="InterPro" id="IPR006638">
    <property type="entry name" value="Elp3/MiaA/NifB-like_rSAM"/>
</dbReference>
<dbReference type="InterPro" id="IPR007197">
    <property type="entry name" value="rSAM"/>
</dbReference>
<dbReference type="NCBIfam" id="TIGR00433">
    <property type="entry name" value="bioB"/>
    <property type="match status" value="1"/>
</dbReference>
<dbReference type="PANTHER" id="PTHR22976">
    <property type="entry name" value="BIOTIN SYNTHASE"/>
    <property type="match status" value="1"/>
</dbReference>
<dbReference type="PANTHER" id="PTHR22976:SF2">
    <property type="entry name" value="BIOTIN SYNTHASE, MITOCHONDRIAL"/>
    <property type="match status" value="1"/>
</dbReference>
<dbReference type="Pfam" id="PF06968">
    <property type="entry name" value="BATS"/>
    <property type="match status" value="1"/>
</dbReference>
<dbReference type="Pfam" id="PF04055">
    <property type="entry name" value="Radical_SAM"/>
    <property type="match status" value="1"/>
</dbReference>
<dbReference type="PIRSF" id="PIRSF001619">
    <property type="entry name" value="Biotin_synth"/>
    <property type="match status" value="1"/>
</dbReference>
<dbReference type="SFLD" id="SFLDF00272">
    <property type="entry name" value="biotin_synthase"/>
    <property type="match status" value="1"/>
</dbReference>
<dbReference type="SFLD" id="SFLDS00029">
    <property type="entry name" value="Radical_SAM"/>
    <property type="match status" value="1"/>
</dbReference>
<dbReference type="SMART" id="SM00876">
    <property type="entry name" value="BATS"/>
    <property type="match status" value="1"/>
</dbReference>
<dbReference type="SMART" id="SM00729">
    <property type="entry name" value="Elp3"/>
    <property type="match status" value="1"/>
</dbReference>
<dbReference type="SUPFAM" id="SSF102114">
    <property type="entry name" value="Radical SAM enzymes"/>
    <property type="match status" value="1"/>
</dbReference>
<dbReference type="PROSITE" id="PS51918">
    <property type="entry name" value="RADICAL_SAM"/>
    <property type="match status" value="1"/>
</dbReference>
<keyword id="KW-0001">2Fe-2S</keyword>
<keyword id="KW-0004">4Fe-4S</keyword>
<keyword id="KW-0093">Biotin biosynthesis</keyword>
<keyword id="KW-0408">Iron</keyword>
<keyword id="KW-0411">Iron-sulfur</keyword>
<keyword id="KW-0479">Metal-binding</keyword>
<keyword id="KW-0496">Mitochondrion</keyword>
<keyword id="KW-1185">Reference proteome</keyword>
<keyword id="KW-0949">S-adenosyl-L-methionine</keyword>
<keyword id="KW-0808">Transferase</keyword>
<keyword id="KW-0809">Transit peptide</keyword>
<gene>
    <name evidence="6" type="primary">bioB</name>
    <name type="ORF">ANIA_06643</name>
</gene>
<protein>
    <recommendedName>
        <fullName evidence="6">Biotin synthase, mitochondrial</fullName>
        <ecNumber evidence="8">2.8.1.6</ecNumber>
    </recommendedName>
</protein>
<sequence>MSVSFTRSFPRAFIRSYGTVQSSPTAASFASRIPPALQEAVAATAPRTNWTRDEVQQIYETPLNQLTYAAAAVHRRFHDPSAIQMCTLMNIKTGGCSEDCSYCAQSSRYSTGLKATKMSPVDDVLEKARIAKANGSTRFCMGAAWRDMRGRKTSLKNVKQMVSGVREMGMEVCVTLGMIDADQAKELKDAGLTAYNHNLDTSREFYPTIITTRSYDERLKTLSHVRDAGINVCSGGILGLGEADSDRIGLIHTVSSLPSHPESFPVNALVPIKGTPLGDRKMISFDKLLRTVATARIVLPATIVRLAAGRISLTEEQQVACFMAGANAVFTGEKMLTTDCNGWDEDRAMFDRWGFYPMRSFEKETNAATPQQHVDSVAHESEKNPAAPAAEAL</sequence>
<comment type="function">
    <text evidence="1 5">Biotin synthase; part of the cluster involved in the biosynthesis of biotin (also known as vitamin B8 or vitamin H), a water-soluble vitamin that functions as a prosthetic group of many carboxylases, such as acetyl-CoA carboxylase and pyruvate carboxylase (PubMed:20713166). Catalyzes the conversion of dethiobiotin (DTB) to biotin by the insertion of a sulfur atom into dethiobiotin via a radical-based mechanism (By similarity).</text>
</comment>
<comment type="catalytic activity">
    <reaction evidence="8">
        <text>(4R,5S)-dethiobiotin + (sulfur carrier)-SH + 2 reduced [2Fe-2S]-[ferredoxin] + 2 S-adenosyl-L-methionine = (sulfur carrier)-H + biotin + 2 5'-deoxyadenosine + 2 L-methionine + 2 oxidized [2Fe-2S]-[ferredoxin]</text>
        <dbReference type="Rhea" id="RHEA:22060"/>
        <dbReference type="Rhea" id="RHEA-COMP:10000"/>
        <dbReference type="Rhea" id="RHEA-COMP:10001"/>
        <dbReference type="Rhea" id="RHEA-COMP:14737"/>
        <dbReference type="Rhea" id="RHEA-COMP:14739"/>
        <dbReference type="ChEBI" id="CHEBI:17319"/>
        <dbReference type="ChEBI" id="CHEBI:29917"/>
        <dbReference type="ChEBI" id="CHEBI:33737"/>
        <dbReference type="ChEBI" id="CHEBI:33738"/>
        <dbReference type="ChEBI" id="CHEBI:57586"/>
        <dbReference type="ChEBI" id="CHEBI:57844"/>
        <dbReference type="ChEBI" id="CHEBI:59789"/>
        <dbReference type="ChEBI" id="CHEBI:64428"/>
        <dbReference type="ChEBI" id="CHEBI:149473"/>
        <dbReference type="EC" id="2.8.1.6"/>
    </reaction>
</comment>
<comment type="cofactor">
    <cofactor evidence="1">
        <name>[4Fe-4S] cluster</name>
        <dbReference type="ChEBI" id="CHEBI:49883"/>
    </cofactor>
    <text evidence="1">Binds 1 [4Fe-4S] cluster. The cluster is coordinated with 3 cysteines and an exchangeable S-adenosyl-L-methionine.</text>
</comment>
<comment type="cofactor">
    <cofactor evidence="1">
        <name>[2Fe-2S] cluster</name>
        <dbReference type="ChEBI" id="CHEBI:190135"/>
    </cofactor>
    <text evidence="1">Binds 1 [2Fe-2S] cluster. The cluster is coordinated with 3 cysteines and 1 arginine.</text>
</comment>
<comment type="pathway">
    <text evidence="8">Cofactor biosynthesis; biotin biosynthesis; biotin from 7,8-diaminononanoate: step 2/2.</text>
</comment>
<comment type="subcellular location">
    <subcellularLocation>
        <location evidence="8">Mitochondrion</location>
    </subcellularLocation>
</comment>
<comment type="induction">
    <text evidence="5">Expression is increased when transferring biotin auxotrophic mutant mycelia from biotin-supplemented medium to biotin-deficient medium.</text>
</comment>
<comment type="similarity">
    <text evidence="7">Belongs to the radical SAM superfamily. Biotin synthase family.</text>
</comment>